<accession>Q81J01</accession>
<protein>
    <recommendedName>
        <fullName evidence="1">Glutamine--fructose-6-phosphate aminotransferase [isomerizing]</fullName>
        <ecNumber evidence="1">2.6.1.16</ecNumber>
    </recommendedName>
    <alternativeName>
        <fullName evidence="1">D-fructose-6-phosphate amidotransferase</fullName>
    </alternativeName>
    <alternativeName>
        <fullName evidence="1">GFAT</fullName>
    </alternativeName>
    <alternativeName>
        <fullName evidence="1">Glucosamine-6-phosphate synthase</fullName>
    </alternativeName>
    <alternativeName>
        <fullName evidence="1">Hexosephosphate aminotransferase</fullName>
    </alternativeName>
    <alternativeName>
        <fullName evidence="1">L-glutamine--D-fructose-6-phosphate amidotransferase</fullName>
    </alternativeName>
</protein>
<gene>
    <name evidence="1" type="primary">glmS</name>
    <name type="ordered locus">BC_0190</name>
</gene>
<evidence type="ECO:0000255" key="1">
    <source>
        <dbReference type="HAMAP-Rule" id="MF_00164"/>
    </source>
</evidence>
<organism>
    <name type="scientific">Bacillus cereus (strain ATCC 14579 / DSM 31 / CCUG 7414 / JCM 2152 / NBRC 15305 / NCIMB 9373 / NCTC 2599 / NRRL B-3711)</name>
    <dbReference type="NCBI Taxonomy" id="226900"/>
    <lineage>
        <taxon>Bacteria</taxon>
        <taxon>Bacillati</taxon>
        <taxon>Bacillota</taxon>
        <taxon>Bacilli</taxon>
        <taxon>Bacillales</taxon>
        <taxon>Bacillaceae</taxon>
        <taxon>Bacillus</taxon>
        <taxon>Bacillus cereus group</taxon>
    </lineage>
</organism>
<sequence length="600" mass="65822">MCGIVGFIGEQDAKEILLKGLEKLEYRGYDSAGIAVQAENGVVVYKEKGRIAKLREIVDENVAASVGIGHTRWATHGVPSKVNAHPHQSTSKRFTLVHNGVIENYELVKKEYLQDVTFVSETDTEVIVQLMEQQVSTGLSVEEAFRNTLSLLHGSYAIGLLDAENPNMIYVAKNKSPLLVGVGDNFNVVASDAMAMLQVTDQFIELMDKEIVIVTKESITIKNLQGETIERAPFTAELDASDIEKGTYPHFMLKEIDEQPLVIRNIIQKYQDENGEIELNQDIRNAILDSDRIYIIACGTSYHAGLVGKQFIEKFAKMPVEVHVASEFSYNMPLLTERPFFIYISQSGETADSRAVLVQTNEMGHKALTITNVPGSTLSREADYTLPLYAGPEIAVASTKAYTAQLAVLSILAADIAKAKGEVLDFDLTHELGLVANAMIELCDQKEEMDALAKQFLATTRNCFFIGRSVDFYVGLEGALKLKEISYIQAEGFAGGELKHGTIALIENGTPVIALATQEHVNLGIRGNVKEVVARGANPCIISMKGLEMEGDSFVLPTVHEALAPLVAVIPLQLISYYAALHRECDVDKPRNLAKSVTVE</sequence>
<name>GLMS_BACCR</name>
<reference key="1">
    <citation type="journal article" date="2003" name="Nature">
        <title>Genome sequence of Bacillus cereus and comparative analysis with Bacillus anthracis.</title>
        <authorList>
            <person name="Ivanova N."/>
            <person name="Sorokin A."/>
            <person name="Anderson I."/>
            <person name="Galleron N."/>
            <person name="Candelon B."/>
            <person name="Kapatral V."/>
            <person name="Bhattacharyya A."/>
            <person name="Reznik G."/>
            <person name="Mikhailova N."/>
            <person name="Lapidus A."/>
            <person name="Chu L."/>
            <person name="Mazur M."/>
            <person name="Goltsman E."/>
            <person name="Larsen N."/>
            <person name="D'Souza M."/>
            <person name="Walunas T."/>
            <person name="Grechkin Y."/>
            <person name="Pusch G."/>
            <person name="Haselkorn R."/>
            <person name="Fonstein M."/>
            <person name="Ehrlich S.D."/>
            <person name="Overbeek R."/>
            <person name="Kyrpides N.C."/>
        </authorList>
    </citation>
    <scope>NUCLEOTIDE SEQUENCE [LARGE SCALE GENOMIC DNA]</scope>
    <source>
        <strain>ATCC 14579 / DSM 31 / CCUG 7414 / JCM 2152 / NBRC 15305 / NCIMB 9373 / NCTC 2599 / NRRL B-3711</strain>
    </source>
</reference>
<comment type="function">
    <text evidence="1">Catalyzes the first step in hexosamine metabolism, converting fructose-6P into glucosamine-6P using glutamine as a nitrogen source.</text>
</comment>
<comment type="catalytic activity">
    <reaction evidence="1">
        <text>D-fructose 6-phosphate + L-glutamine = D-glucosamine 6-phosphate + L-glutamate</text>
        <dbReference type="Rhea" id="RHEA:13237"/>
        <dbReference type="ChEBI" id="CHEBI:29985"/>
        <dbReference type="ChEBI" id="CHEBI:58359"/>
        <dbReference type="ChEBI" id="CHEBI:58725"/>
        <dbReference type="ChEBI" id="CHEBI:61527"/>
        <dbReference type="EC" id="2.6.1.16"/>
    </reaction>
</comment>
<comment type="subunit">
    <text evidence="1">Homodimer.</text>
</comment>
<comment type="subcellular location">
    <subcellularLocation>
        <location evidence="1">Cytoplasm</location>
    </subcellularLocation>
</comment>
<dbReference type="EC" id="2.6.1.16" evidence="1"/>
<dbReference type="EMBL" id="AE016877">
    <property type="protein sequence ID" value="AAP07259.1"/>
    <property type="molecule type" value="Genomic_DNA"/>
</dbReference>
<dbReference type="RefSeq" id="NP_830058.1">
    <property type="nucleotide sequence ID" value="NC_004722.1"/>
</dbReference>
<dbReference type="RefSeq" id="WP_000334164.1">
    <property type="nucleotide sequence ID" value="NZ_CP138336.1"/>
</dbReference>
<dbReference type="SMR" id="Q81J01"/>
<dbReference type="STRING" id="226900.BC_0190"/>
<dbReference type="KEGG" id="bce:BC0190"/>
<dbReference type="PATRIC" id="fig|226900.8.peg.181"/>
<dbReference type="HOGENOM" id="CLU_012520_7_1_9"/>
<dbReference type="OrthoDB" id="106547at2"/>
<dbReference type="Proteomes" id="UP000001417">
    <property type="component" value="Chromosome"/>
</dbReference>
<dbReference type="GO" id="GO:0005829">
    <property type="term" value="C:cytosol"/>
    <property type="evidence" value="ECO:0000318"/>
    <property type="project" value="GO_Central"/>
</dbReference>
<dbReference type="GO" id="GO:0097367">
    <property type="term" value="F:carbohydrate derivative binding"/>
    <property type="evidence" value="ECO:0007669"/>
    <property type="project" value="InterPro"/>
</dbReference>
<dbReference type="GO" id="GO:0004360">
    <property type="term" value="F:glutamine-fructose-6-phosphate transaminase (isomerizing) activity"/>
    <property type="evidence" value="ECO:0000318"/>
    <property type="project" value="GO_Central"/>
</dbReference>
<dbReference type="GO" id="GO:0005975">
    <property type="term" value="P:carbohydrate metabolic process"/>
    <property type="evidence" value="ECO:0007669"/>
    <property type="project" value="UniProtKB-UniRule"/>
</dbReference>
<dbReference type="GO" id="GO:0006002">
    <property type="term" value="P:fructose 6-phosphate metabolic process"/>
    <property type="evidence" value="ECO:0000318"/>
    <property type="project" value="GO_Central"/>
</dbReference>
<dbReference type="GO" id="GO:0006487">
    <property type="term" value="P:protein N-linked glycosylation"/>
    <property type="evidence" value="ECO:0000318"/>
    <property type="project" value="GO_Central"/>
</dbReference>
<dbReference type="GO" id="GO:0006047">
    <property type="term" value="P:UDP-N-acetylglucosamine metabolic process"/>
    <property type="evidence" value="ECO:0000318"/>
    <property type="project" value="GO_Central"/>
</dbReference>
<dbReference type="CDD" id="cd00714">
    <property type="entry name" value="GFAT"/>
    <property type="match status" value="1"/>
</dbReference>
<dbReference type="CDD" id="cd05008">
    <property type="entry name" value="SIS_GlmS_GlmD_1"/>
    <property type="match status" value="1"/>
</dbReference>
<dbReference type="CDD" id="cd05009">
    <property type="entry name" value="SIS_GlmS_GlmD_2"/>
    <property type="match status" value="1"/>
</dbReference>
<dbReference type="FunFam" id="3.40.50.10490:FF:000022">
    <property type="entry name" value="Glutamine--fructose-6-phosphate aminotransferase [isomerizing]"/>
    <property type="match status" value="1"/>
</dbReference>
<dbReference type="FunFam" id="3.60.20.10:FF:000006">
    <property type="entry name" value="Glutamine--fructose-6-phosphate aminotransferase [isomerizing]"/>
    <property type="match status" value="1"/>
</dbReference>
<dbReference type="Gene3D" id="3.40.50.10490">
    <property type="entry name" value="Glucose-6-phosphate isomerase like protein, domain 1"/>
    <property type="match status" value="2"/>
</dbReference>
<dbReference type="Gene3D" id="3.60.20.10">
    <property type="entry name" value="Glutamine Phosphoribosylpyrophosphate, subunit 1, domain 1"/>
    <property type="match status" value="1"/>
</dbReference>
<dbReference type="HAMAP" id="MF_00164">
    <property type="entry name" value="GlmS"/>
    <property type="match status" value="1"/>
</dbReference>
<dbReference type="InterPro" id="IPR017932">
    <property type="entry name" value="GATase_2_dom"/>
</dbReference>
<dbReference type="InterPro" id="IPR005855">
    <property type="entry name" value="GFAT"/>
</dbReference>
<dbReference type="InterPro" id="IPR047084">
    <property type="entry name" value="GFAT_N"/>
</dbReference>
<dbReference type="InterPro" id="IPR035466">
    <property type="entry name" value="GlmS/AgaS_SIS"/>
</dbReference>
<dbReference type="InterPro" id="IPR035490">
    <property type="entry name" value="GlmS/FrlB_SIS"/>
</dbReference>
<dbReference type="InterPro" id="IPR029055">
    <property type="entry name" value="Ntn_hydrolases_N"/>
</dbReference>
<dbReference type="InterPro" id="IPR001347">
    <property type="entry name" value="SIS_dom"/>
</dbReference>
<dbReference type="InterPro" id="IPR046348">
    <property type="entry name" value="SIS_dom_sf"/>
</dbReference>
<dbReference type="NCBIfam" id="TIGR01135">
    <property type="entry name" value="glmS"/>
    <property type="match status" value="1"/>
</dbReference>
<dbReference type="NCBIfam" id="NF001484">
    <property type="entry name" value="PRK00331.1"/>
    <property type="match status" value="1"/>
</dbReference>
<dbReference type="PANTHER" id="PTHR10937">
    <property type="entry name" value="GLUCOSAMINE--FRUCTOSE-6-PHOSPHATE AMINOTRANSFERASE, ISOMERIZING"/>
    <property type="match status" value="1"/>
</dbReference>
<dbReference type="PANTHER" id="PTHR10937:SF0">
    <property type="entry name" value="GLUTAMINE--FRUCTOSE-6-PHOSPHATE TRANSAMINASE (ISOMERIZING)"/>
    <property type="match status" value="1"/>
</dbReference>
<dbReference type="Pfam" id="PF13522">
    <property type="entry name" value="GATase_6"/>
    <property type="match status" value="1"/>
</dbReference>
<dbReference type="Pfam" id="PF01380">
    <property type="entry name" value="SIS"/>
    <property type="match status" value="2"/>
</dbReference>
<dbReference type="SUPFAM" id="SSF56235">
    <property type="entry name" value="N-terminal nucleophile aminohydrolases (Ntn hydrolases)"/>
    <property type="match status" value="1"/>
</dbReference>
<dbReference type="SUPFAM" id="SSF53697">
    <property type="entry name" value="SIS domain"/>
    <property type="match status" value="1"/>
</dbReference>
<dbReference type="PROSITE" id="PS51278">
    <property type="entry name" value="GATASE_TYPE_2"/>
    <property type="match status" value="1"/>
</dbReference>
<dbReference type="PROSITE" id="PS51464">
    <property type="entry name" value="SIS"/>
    <property type="match status" value="2"/>
</dbReference>
<feature type="initiator methionine" description="Removed" evidence="1">
    <location>
        <position position="1"/>
    </location>
</feature>
<feature type="chain" id="PRO_0000135295" description="Glutamine--fructose-6-phosphate aminotransferase [isomerizing]">
    <location>
        <begin position="2"/>
        <end position="600"/>
    </location>
</feature>
<feature type="domain" description="Glutamine amidotransferase type-2" evidence="1">
    <location>
        <begin position="2"/>
        <end position="217"/>
    </location>
</feature>
<feature type="domain" description="SIS 1" evidence="1">
    <location>
        <begin position="283"/>
        <end position="422"/>
    </location>
</feature>
<feature type="domain" description="SIS 2" evidence="1">
    <location>
        <begin position="452"/>
        <end position="590"/>
    </location>
</feature>
<feature type="active site" description="Nucleophile; for GATase activity" evidence="1">
    <location>
        <position position="2"/>
    </location>
</feature>
<feature type="active site" description="For Fru-6P isomerization activity" evidence="1">
    <location>
        <position position="595"/>
    </location>
</feature>
<proteinExistence type="inferred from homology"/>
<keyword id="KW-0032">Aminotransferase</keyword>
<keyword id="KW-0963">Cytoplasm</keyword>
<keyword id="KW-0315">Glutamine amidotransferase</keyword>
<keyword id="KW-1185">Reference proteome</keyword>
<keyword id="KW-0677">Repeat</keyword>
<keyword id="KW-0808">Transferase</keyword>